<organism>
    <name type="scientific">Prochlorococcus marinus (strain MIT 9313)</name>
    <dbReference type="NCBI Taxonomy" id="74547"/>
    <lineage>
        <taxon>Bacteria</taxon>
        <taxon>Bacillati</taxon>
        <taxon>Cyanobacteriota</taxon>
        <taxon>Cyanophyceae</taxon>
        <taxon>Synechococcales</taxon>
        <taxon>Prochlorococcaceae</taxon>
        <taxon>Prochlorococcus</taxon>
    </lineage>
</organism>
<name>DNCH_PROMM</name>
<dbReference type="EC" id="3.1.2.28" evidence="1"/>
<dbReference type="EMBL" id="BX548175">
    <property type="protein sequence ID" value="CAE22229.1"/>
    <property type="molecule type" value="Genomic_DNA"/>
</dbReference>
<dbReference type="RefSeq" id="WP_011131420.1">
    <property type="nucleotide sequence ID" value="NC_005071.1"/>
</dbReference>
<dbReference type="PDB" id="2HX5">
    <property type="method" value="X-ray"/>
    <property type="resolution" value="1.50 A"/>
    <property type="chains" value="A=1-151"/>
</dbReference>
<dbReference type="PDBsum" id="2HX5"/>
<dbReference type="SMR" id="Q7V4A7"/>
<dbReference type="DNASU" id="1729478"/>
<dbReference type="KEGG" id="pmt:PMT_2055"/>
<dbReference type="eggNOG" id="COG0824">
    <property type="taxonomic scope" value="Bacteria"/>
</dbReference>
<dbReference type="HOGENOM" id="CLU_101141_5_3_3"/>
<dbReference type="OrthoDB" id="9800856at2"/>
<dbReference type="UniPathway" id="UPA00995"/>
<dbReference type="UniPathway" id="UPA01057">
    <property type="reaction ID" value="UER01033"/>
</dbReference>
<dbReference type="EvolutionaryTrace" id="Q7V4A7"/>
<dbReference type="Proteomes" id="UP000001423">
    <property type="component" value="Chromosome"/>
</dbReference>
<dbReference type="GO" id="GO:0061522">
    <property type="term" value="F:1,4-dihydroxy-2-naphthoyl-CoA thioesterase activity"/>
    <property type="evidence" value="ECO:0007669"/>
    <property type="project" value="UniProtKB-EC"/>
</dbReference>
<dbReference type="GO" id="GO:0042372">
    <property type="term" value="P:phylloquinone biosynthetic process"/>
    <property type="evidence" value="ECO:0007669"/>
    <property type="project" value="UniProtKB-UniRule"/>
</dbReference>
<dbReference type="CDD" id="cd00586">
    <property type="entry name" value="4HBT"/>
    <property type="match status" value="1"/>
</dbReference>
<dbReference type="Gene3D" id="3.10.129.10">
    <property type="entry name" value="Hotdog Thioesterase"/>
    <property type="match status" value="1"/>
</dbReference>
<dbReference type="HAMAP" id="MF_02101">
    <property type="entry name" value="DHNA_CoA_hydrolase"/>
    <property type="match status" value="1"/>
</dbReference>
<dbReference type="InterPro" id="IPR022829">
    <property type="entry name" value="DHNA_CoA_hydrolase"/>
</dbReference>
<dbReference type="InterPro" id="IPR029069">
    <property type="entry name" value="HotDog_dom_sf"/>
</dbReference>
<dbReference type="Pfam" id="PF13279">
    <property type="entry name" value="4HBT_2"/>
    <property type="match status" value="1"/>
</dbReference>
<dbReference type="SUPFAM" id="SSF54637">
    <property type="entry name" value="Thioesterase/thiol ester dehydrase-isomerase"/>
    <property type="match status" value="1"/>
</dbReference>
<keyword id="KW-0002">3D-structure</keyword>
<keyword id="KW-0378">Hydrolase</keyword>
<keyword id="KW-1185">Reference proteome</keyword>
<sequence length="151" mass="17304">MNPENWLLLRRVVRFGDTDAAGVMHFHQLFRWCHESWEESLESYGLNPADIFPGSRKSEVTPEVALPIIHCQADFRRPIHTGDALAMELRPERLNPNSFQVHFEFRCEEQIAAHALIRHLAINAQTRHRCALPEGIDRWLEASGVGKIGSI</sequence>
<evidence type="ECO:0000255" key="1">
    <source>
        <dbReference type="HAMAP-Rule" id="MF_02101"/>
    </source>
</evidence>
<evidence type="ECO:0007829" key="2">
    <source>
        <dbReference type="PDB" id="2HX5"/>
    </source>
</evidence>
<feature type="chain" id="PRO_0000377022" description="1,4-dihydroxy-2-naphthoyl-CoA hydrolase">
    <location>
        <begin position="1"/>
        <end position="151"/>
    </location>
</feature>
<feature type="active site" evidence="1">
    <location>
        <position position="19"/>
    </location>
</feature>
<feature type="helix" evidence="2">
    <location>
        <begin position="4"/>
        <end position="7"/>
    </location>
</feature>
<feature type="strand" evidence="2">
    <location>
        <begin position="8"/>
        <end position="12"/>
    </location>
</feature>
<feature type="helix" evidence="2">
    <location>
        <begin position="15"/>
        <end position="17"/>
    </location>
</feature>
<feature type="strand" evidence="2">
    <location>
        <begin position="22"/>
        <end position="24"/>
    </location>
</feature>
<feature type="helix" evidence="2">
    <location>
        <begin position="28"/>
        <end position="44"/>
    </location>
</feature>
<feature type="helix" evidence="2">
    <location>
        <begin position="48"/>
        <end position="51"/>
    </location>
</feature>
<feature type="strand" evidence="2">
    <location>
        <begin position="63"/>
        <end position="65"/>
    </location>
</feature>
<feature type="strand" evidence="2">
    <location>
        <begin position="68"/>
        <end position="75"/>
    </location>
</feature>
<feature type="strand" evidence="2">
    <location>
        <begin position="84"/>
        <end position="95"/>
    </location>
</feature>
<feature type="strand" evidence="2">
    <location>
        <begin position="98"/>
        <end position="107"/>
    </location>
</feature>
<feature type="strand" evidence="2">
    <location>
        <begin position="110"/>
        <end position="120"/>
    </location>
</feature>
<feature type="turn" evidence="2">
    <location>
        <begin position="124"/>
        <end position="126"/>
    </location>
</feature>
<feature type="helix" evidence="2">
    <location>
        <begin position="134"/>
        <end position="142"/>
    </location>
</feature>
<proteinExistence type="evidence at protein level"/>
<reference key="1">
    <citation type="journal article" date="2003" name="Nature">
        <title>Genome divergence in two Prochlorococcus ecotypes reflects oceanic niche differentiation.</title>
        <authorList>
            <person name="Rocap G."/>
            <person name="Larimer F.W."/>
            <person name="Lamerdin J.E."/>
            <person name="Malfatti S."/>
            <person name="Chain P."/>
            <person name="Ahlgren N.A."/>
            <person name="Arellano A."/>
            <person name="Coleman M."/>
            <person name="Hauser L."/>
            <person name="Hess W.R."/>
            <person name="Johnson Z.I."/>
            <person name="Land M.L."/>
            <person name="Lindell D."/>
            <person name="Post A.F."/>
            <person name="Regala W."/>
            <person name="Shah M."/>
            <person name="Shaw S.L."/>
            <person name="Steglich C."/>
            <person name="Sullivan M.B."/>
            <person name="Ting C.S."/>
            <person name="Tolonen A."/>
            <person name="Webb E.A."/>
            <person name="Zinser E.R."/>
            <person name="Chisholm S.W."/>
        </authorList>
    </citation>
    <scope>NUCLEOTIDE SEQUENCE [LARGE SCALE GENOMIC DNA]</scope>
    <source>
        <strain>MIT 9313</strain>
    </source>
</reference>
<comment type="function">
    <text evidence="1">Catalyzes the hydrolysis of 1,4-dihydroxy-2-naphthoyl-CoA (DHNA-CoA) to 1,4-dihydroxy-2-naphthoate (DHNA), a reaction involved in phylloquinone (vitamin K1) biosynthesis.</text>
</comment>
<comment type="catalytic activity">
    <reaction evidence="1">
        <text>1,4-dihydroxy-2-naphthoyl-CoA + H2O = 1,4-dihydroxy-2-naphthoate + CoA + H(+)</text>
        <dbReference type="Rhea" id="RHEA:26309"/>
        <dbReference type="ChEBI" id="CHEBI:11173"/>
        <dbReference type="ChEBI" id="CHEBI:15377"/>
        <dbReference type="ChEBI" id="CHEBI:15378"/>
        <dbReference type="ChEBI" id="CHEBI:57287"/>
        <dbReference type="ChEBI" id="CHEBI:58897"/>
        <dbReference type="EC" id="3.1.2.28"/>
    </reaction>
</comment>
<comment type="pathway">
    <text evidence="1">Cofactor biosynthesis; phylloquinone biosynthesis.</text>
</comment>
<comment type="pathway">
    <text evidence="1">Quinol/quinone metabolism; 1,4-dihydroxy-2-naphthoate biosynthesis; 1,4-dihydroxy-2-naphthoate from chorismate: step 7/7.</text>
</comment>
<comment type="similarity">
    <text evidence="1">Belongs to the 4-hydroxybenzoyl-CoA thioesterase family. DHNA-CoA hydrolase subfamily.</text>
</comment>
<gene>
    <name type="ordered locus">PMT_2055</name>
</gene>
<protein>
    <recommendedName>
        <fullName evidence="1">1,4-dihydroxy-2-naphthoyl-CoA hydrolase</fullName>
        <shortName evidence="1">DHNA-CoA hydrolase</shortName>
        <ecNumber evidence="1">3.1.2.28</ecNumber>
    </recommendedName>
    <alternativeName>
        <fullName evidence="1">DHNA-CoA thioesterase</fullName>
    </alternativeName>
</protein>
<accession>Q7V4A7</accession>